<reference key="1">
    <citation type="submission" date="2003-12" db="EMBL/GenBank/DDBJ databases">
        <authorList>
            <consortium name="NIH - Xenopus Gene Collection (XGC) project"/>
        </authorList>
    </citation>
    <scope>NUCLEOTIDE SEQUENCE [LARGE SCALE MRNA]</scope>
    <source>
        <tissue>Embryo</tissue>
    </source>
</reference>
<keyword id="KW-0175">Coiled coil</keyword>
<keyword id="KW-0539">Nucleus</keyword>
<keyword id="KW-1185">Reference proteome</keyword>
<keyword id="KW-0804">Transcription</keyword>
<keyword id="KW-0805">Transcription regulation</keyword>
<sequence>MAPTIQTQAQREDGHRSSSHRTVPERSGVVCRVKYCNTLPDIPFDPKFITYPFDQNRFVQYKATSLEKQHKHDLLTEPDLGVTIDLINPDTYRIDPNVTLDIADEKLLEEEIQAPSSSKRSQQHAKVVPWMRKTEYISTEFNRYGVSNEKPEVKIGVSVKQQFTEEDIYKDRDSQISAIEKTFEDAQKPISQHYSKPRVTPVEVMPVFPDFKMWINPCAQVIFDSDPAPKDASGSAALDMMSQAMIRGMMDEEGNQFVAYFLPGEETMRKRKRDQEEGLDYMPEDIYDYKIAREYNWNVKNKASKGYEENYFFIFREGDGVYYNELETRVRLSKRRVKAGVQSGTNAVLVVKHRDMHEKELEAQEARRAQLENHEPEEEEEIEVDQETQGSDAEDGEKGSGSEKEGSGAEQSGSESEREEAEEEEKEDEEEKESSEEDRAARDKEEIFGSDDDDSDEDGPNESGQDGEDSGSDDEEEKGQGRRSRSASSSPFGSDHSQQENEDQSASDQGSGSSTGSDSD</sequence>
<dbReference type="EMBL" id="BC064253">
    <property type="protein sequence ID" value="AAH64253.1"/>
    <property type="molecule type" value="mRNA"/>
</dbReference>
<dbReference type="RefSeq" id="NP_989348.1">
    <property type="nucleotide sequence ID" value="NM_204017.1"/>
</dbReference>
<dbReference type="SMR" id="Q6P2Y1"/>
<dbReference type="FunCoup" id="Q6P2Y1">
    <property type="interactions" value="4364"/>
</dbReference>
<dbReference type="STRING" id="8364.ENSXETP00000004066"/>
<dbReference type="DNASU" id="394974"/>
<dbReference type="GeneID" id="394974"/>
<dbReference type="KEGG" id="xtr:394974"/>
<dbReference type="AGR" id="Xenbase:XB-GENE-5797651"/>
<dbReference type="CTD" id="54623"/>
<dbReference type="Xenbase" id="XB-GENE-5797651">
    <property type="gene designation" value="paf1"/>
</dbReference>
<dbReference type="InParanoid" id="Q6P2Y1"/>
<dbReference type="OMA" id="LVCRIKY"/>
<dbReference type="OrthoDB" id="10260285at2759"/>
<dbReference type="Reactome" id="R-XTR-112382">
    <property type="pathway name" value="Formation of RNA Pol II elongation complex"/>
</dbReference>
<dbReference type="Reactome" id="R-XTR-674695">
    <property type="pathway name" value="RNA Polymerase II Pre-transcription Events"/>
</dbReference>
<dbReference type="Reactome" id="R-XTR-75955">
    <property type="pathway name" value="RNA Polymerase II Transcription Elongation"/>
</dbReference>
<dbReference type="Reactome" id="R-XTR-8866654">
    <property type="pathway name" value="E3 ubiquitin ligases ubiquitinate target proteins"/>
</dbReference>
<dbReference type="Proteomes" id="UP000008143">
    <property type="component" value="Chromosome 8"/>
</dbReference>
<dbReference type="Bgee" id="ENSXETG00000002902">
    <property type="expression patterns" value="Expressed in gastrula and 13 other cell types or tissues"/>
</dbReference>
<dbReference type="ExpressionAtlas" id="Q6P2Y1">
    <property type="expression patterns" value="baseline and differential"/>
</dbReference>
<dbReference type="GO" id="GO:0016593">
    <property type="term" value="C:Cdc73/Paf1 complex"/>
    <property type="evidence" value="ECO:0000250"/>
    <property type="project" value="UniProtKB"/>
</dbReference>
<dbReference type="GO" id="GO:0000993">
    <property type="term" value="F:RNA polymerase II complex binding"/>
    <property type="evidence" value="ECO:0000250"/>
    <property type="project" value="UniProtKB"/>
</dbReference>
<dbReference type="GO" id="GO:0000122">
    <property type="term" value="P:negative regulation of transcription by RNA polymerase II"/>
    <property type="evidence" value="ECO:0000250"/>
    <property type="project" value="UniProtKB"/>
</dbReference>
<dbReference type="GO" id="GO:0006368">
    <property type="term" value="P:transcription elongation by RNA polymerase II"/>
    <property type="evidence" value="ECO:0000250"/>
    <property type="project" value="UniProtKB"/>
</dbReference>
<dbReference type="InterPro" id="IPR007133">
    <property type="entry name" value="RNA_pol_II-assoc_Paf1"/>
</dbReference>
<dbReference type="PANTHER" id="PTHR23188">
    <property type="entry name" value="RNA POLYMERASE II-ASSOCIATED FACTOR 1 HOMOLOG"/>
    <property type="match status" value="1"/>
</dbReference>
<dbReference type="PANTHER" id="PTHR23188:SF12">
    <property type="entry name" value="RNA POLYMERASE II-ASSOCIATED FACTOR 1 HOMOLOG"/>
    <property type="match status" value="1"/>
</dbReference>
<dbReference type="Pfam" id="PF03985">
    <property type="entry name" value="Paf1"/>
    <property type="match status" value="1"/>
</dbReference>
<name>PAF1_XENTR</name>
<gene>
    <name type="primary">paf1</name>
</gene>
<accession>Q6P2Y1</accession>
<evidence type="ECO:0000250" key="1"/>
<evidence type="ECO:0000250" key="2">
    <source>
        <dbReference type="UniProtKB" id="Q8K2T8"/>
    </source>
</evidence>
<evidence type="ECO:0000250" key="3">
    <source>
        <dbReference type="UniProtKB" id="Q8N7H5"/>
    </source>
</evidence>
<evidence type="ECO:0000255" key="4"/>
<evidence type="ECO:0000256" key="5">
    <source>
        <dbReference type="SAM" id="MobiDB-lite"/>
    </source>
</evidence>
<evidence type="ECO:0000305" key="6"/>
<comment type="function">
    <text evidence="1">Component of the PAF1 complex (PAF1C) which has multiple functions during transcription by RNA polymerase II. PAF1C associates with RNA polymerase II, is involved in transcriptional elongation and in histone modifications including methylation on histone H3 'Lys-4' (H3K4me3) (By similarity).</text>
</comment>
<comment type="subunit">
    <text evidence="2 3">Component of the PAF1 complex, which at least consists of cdc73, paf1, leo1, ctr9 and rtf1 (By similarity). The PAF1 complex interacts with PHF5A (By similarity).</text>
</comment>
<comment type="subcellular location">
    <subcellularLocation>
        <location evidence="6">Nucleus</location>
    </subcellularLocation>
</comment>
<comment type="similarity">
    <text evidence="6">Belongs to the PAF1 family.</text>
</comment>
<proteinExistence type="evidence at transcript level"/>
<protein>
    <recommendedName>
        <fullName>RNA polymerase II-associated factor 1 homolog</fullName>
    </recommendedName>
</protein>
<feature type="chain" id="PRO_0000326406" description="RNA polymerase II-associated factor 1 homolog">
    <location>
        <begin position="1"/>
        <end position="520"/>
    </location>
</feature>
<feature type="region of interest" description="Disordered" evidence="5">
    <location>
        <begin position="1"/>
        <end position="23"/>
    </location>
</feature>
<feature type="region of interest" description="Disordered" evidence="5">
    <location>
        <begin position="359"/>
        <end position="520"/>
    </location>
</feature>
<feature type="coiled-coil region" evidence="4">
    <location>
        <begin position="351"/>
        <end position="447"/>
    </location>
</feature>
<feature type="compositionally biased region" description="Basic and acidic residues" evidence="5">
    <location>
        <begin position="359"/>
        <end position="374"/>
    </location>
</feature>
<feature type="compositionally biased region" description="Acidic residues" evidence="5">
    <location>
        <begin position="375"/>
        <end position="386"/>
    </location>
</feature>
<feature type="compositionally biased region" description="Basic and acidic residues" evidence="5">
    <location>
        <begin position="396"/>
        <end position="407"/>
    </location>
</feature>
<feature type="compositionally biased region" description="Acidic residues" evidence="5">
    <location>
        <begin position="417"/>
        <end position="436"/>
    </location>
</feature>
<feature type="compositionally biased region" description="Basic and acidic residues" evidence="5">
    <location>
        <begin position="437"/>
        <end position="447"/>
    </location>
</feature>
<feature type="compositionally biased region" description="Acidic residues" evidence="5">
    <location>
        <begin position="448"/>
        <end position="477"/>
    </location>
</feature>
<feature type="compositionally biased region" description="Low complexity" evidence="5">
    <location>
        <begin position="506"/>
        <end position="520"/>
    </location>
</feature>
<organism>
    <name type="scientific">Xenopus tropicalis</name>
    <name type="common">Western clawed frog</name>
    <name type="synonym">Silurana tropicalis</name>
    <dbReference type="NCBI Taxonomy" id="8364"/>
    <lineage>
        <taxon>Eukaryota</taxon>
        <taxon>Metazoa</taxon>
        <taxon>Chordata</taxon>
        <taxon>Craniata</taxon>
        <taxon>Vertebrata</taxon>
        <taxon>Euteleostomi</taxon>
        <taxon>Amphibia</taxon>
        <taxon>Batrachia</taxon>
        <taxon>Anura</taxon>
        <taxon>Pipoidea</taxon>
        <taxon>Pipidae</taxon>
        <taxon>Xenopodinae</taxon>
        <taxon>Xenopus</taxon>
        <taxon>Silurana</taxon>
    </lineage>
</organism>